<organism>
    <name type="scientific">Escherichia coli (strain SMS-3-5 / SECEC)</name>
    <dbReference type="NCBI Taxonomy" id="439855"/>
    <lineage>
        <taxon>Bacteria</taxon>
        <taxon>Pseudomonadati</taxon>
        <taxon>Pseudomonadota</taxon>
        <taxon>Gammaproteobacteria</taxon>
        <taxon>Enterobacterales</taxon>
        <taxon>Enterobacteriaceae</taxon>
        <taxon>Escherichia</taxon>
    </lineage>
</organism>
<reference key="1">
    <citation type="journal article" date="2008" name="J. Bacteriol.">
        <title>Insights into the environmental resistance gene pool from the genome sequence of the multidrug-resistant environmental isolate Escherichia coli SMS-3-5.</title>
        <authorList>
            <person name="Fricke W.F."/>
            <person name="Wright M.S."/>
            <person name="Lindell A.H."/>
            <person name="Harkins D.M."/>
            <person name="Baker-Austin C."/>
            <person name="Ravel J."/>
            <person name="Stepanauskas R."/>
        </authorList>
    </citation>
    <scope>NUCLEOTIDE SEQUENCE [LARGE SCALE GENOMIC DNA]</scope>
    <source>
        <strain>SMS-3-5 / SECEC</strain>
    </source>
</reference>
<protein>
    <recommendedName>
        <fullName evidence="1">tRNA (guanine-N(1)-)-methyltransferase</fullName>
        <ecNumber evidence="1">2.1.1.228</ecNumber>
    </recommendedName>
    <alternativeName>
        <fullName evidence="1">M1G-methyltransferase</fullName>
    </alternativeName>
    <alternativeName>
        <fullName evidence="1">tRNA [GM37] methyltransferase</fullName>
    </alternativeName>
</protein>
<evidence type="ECO:0000255" key="1">
    <source>
        <dbReference type="HAMAP-Rule" id="MF_00605"/>
    </source>
</evidence>
<sequence length="255" mass="28422">MWIGIISLFPEMFRAITDYGVTGRAVKNGLLSIQSWSPRDFTHDRHRTVDDRPYGGGPGMLMMVQPLRDAIHAAKAAAGEGAKVIYLSPQGRKLDQAGVSELATNQKLILVCGRYEGIDERVIQTEIDEEWSIGDYVLSGGELPAMTLIDSVSRFIPGVLGHEASATEDSFAEGLLDCPHYTRPEVLEGMEVPPVLLSGNHAEIRRWRLKQSLGRTWLRRPELLENLALTEEQARLLAEFKTEHAQQQHKHDGMA</sequence>
<gene>
    <name evidence="1" type="primary">trmD</name>
    <name type="ordered locus">EcSMS35_2759</name>
</gene>
<keyword id="KW-0963">Cytoplasm</keyword>
<keyword id="KW-0489">Methyltransferase</keyword>
<keyword id="KW-0949">S-adenosyl-L-methionine</keyword>
<keyword id="KW-0808">Transferase</keyword>
<keyword id="KW-0819">tRNA processing</keyword>
<comment type="function">
    <text evidence="1">Specifically methylates guanosine-37 in various tRNAs.</text>
</comment>
<comment type="catalytic activity">
    <reaction evidence="1">
        <text>guanosine(37) in tRNA + S-adenosyl-L-methionine = N(1)-methylguanosine(37) in tRNA + S-adenosyl-L-homocysteine + H(+)</text>
        <dbReference type="Rhea" id="RHEA:36899"/>
        <dbReference type="Rhea" id="RHEA-COMP:10145"/>
        <dbReference type="Rhea" id="RHEA-COMP:10147"/>
        <dbReference type="ChEBI" id="CHEBI:15378"/>
        <dbReference type="ChEBI" id="CHEBI:57856"/>
        <dbReference type="ChEBI" id="CHEBI:59789"/>
        <dbReference type="ChEBI" id="CHEBI:73542"/>
        <dbReference type="ChEBI" id="CHEBI:74269"/>
        <dbReference type="EC" id="2.1.1.228"/>
    </reaction>
</comment>
<comment type="subunit">
    <text evidence="1">Homodimer.</text>
</comment>
<comment type="subcellular location">
    <subcellularLocation>
        <location evidence="1">Cytoplasm</location>
    </subcellularLocation>
</comment>
<comment type="similarity">
    <text evidence="1">Belongs to the RNA methyltransferase TrmD family.</text>
</comment>
<proteinExistence type="inferred from homology"/>
<name>TRMD_ECOSM</name>
<accession>B1LPB4</accession>
<dbReference type="EC" id="2.1.1.228" evidence="1"/>
<dbReference type="EMBL" id="CP000970">
    <property type="protein sequence ID" value="ACB16387.1"/>
    <property type="molecule type" value="Genomic_DNA"/>
</dbReference>
<dbReference type="RefSeq" id="WP_000264777.1">
    <property type="nucleotide sequence ID" value="NC_010498.1"/>
</dbReference>
<dbReference type="SMR" id="B1LPB4"/>
<dbReference type="GeneID" id="93774457"/>
<dbReference type="KEGG" id="ecm:EcSMS35_2759"/>
<dbReference type="HOGENOM" id="CLU_047363_0_1_6"/>
<dbReference type="Proteomes" id="UP000007011">
    <property type="component" value="Chromosome"/>
</dbReference>
<dbReference type="GO" id="GO:0005829">
    <property type="term" value="C:cytosol"/>
    <property type="evidence" value="ECO:0007669"/>
    <property type="project" value="TreeGrafter"/>
</dbReference>
<dbReference type="GO" id="GO:0052906">
    <property type="term" value="F:tRNA (guanine(37)-N1)-methyltransferase activity"/>
    <property type="evidence" value="ECO:0007669"/>
    <property type="project" value="UniProtKB-UniRule"/>
</dbReference>
<dbReference type="GO" id="GO:0002939">
    <property type="term" value="P:tRNA N1-guanine methylation"/>
    <property type="evidence" value="ECO:0007669"/>
    <property type="project" value="TreeGrafter"/>
</dbReference>
<dbReference type="CDD" id="cd18080">
    <property type="entry name" value="TrmD-like"/>
    <property type="match status" value="1"/>
</dbReference>
<dbReference type="FunFam" id="1.10.1270.20:FF:000001">
    <property type="entry name" value="tRNA (guanine-N(1)-)-methyltransferase"/>
    <property type="match status" value="1"/>
</dbReference>
<dbReference type="FunFam" id="3.40.1280.10:FF:000001">
    <property type="entry name" value="tRNA (guanine-N(1)-)-methyltransferase"/>
    <property type="match status" value="1"/>
</dbReference>
<dbReference type="Gene3D" id="3.40.1280.10">
    <property type="match status" value="1"/>
</dbReference>
<dbReference type="Gene3D" id="1.10.1270.20">
    <property type="entry name" value="tRNA(m1g37)methyltransferase, domain 2"/>
    <property type="match status" value="1"/>
</dbReference>
<dbReference type="HAMAP" id="MF_00605">
    <property type="entry name" value="TrmD"/>
    <property type="match status" value="1"/>
</dbReference>
<dbReference type="InterPro" id="IPR029028">
    <property type="entry name" value="Alpha/beta_knot_MTases"/>
</dbReference>
<dbReference type="InterPro" id="IPR023148">
    <property type="entry name" value="tRNA_m1G_MeTrfase_C_sf"/>
</dbReference>
<dbReference type="InterPro" id="IPR002649">
    <property type="entry name" value="tRNA_m1G_MeTrfase_TrmD"/>
</dbReference>
<dbReference type="InterPro" id="IPR029026">
    <property type="entry name" value="tRNA_m1G_MTases_N"/>
</dbReference>
<dbReference type="InterPro" id="IPR016009">
    <property type="entry name" value="tRNA_MeTrfase_TRMD/TRM10"/>
</dbReference>
<dbReference type="NCBIfam" id="NF000648">
    <property type="entry name" value="PRK00026.1"/>
    <property type="match status" value="1"/>
</dbReference>
<dbReference type="NCBIfam" id="TIGR00088">
    <property type="entry name" value="trmD"/>
    <property type="match status" value="1"/>
</dbReference>
<dbReference type="PANTHER" id="PTHR46417">
    <property type="entry name" value="TRNA (GUANINE-N(1)-)-METHYLTRANSFERASE"/>
    <property type="match status" value="1"/>
</dbReference>
<dbReference type="PANTHER" id="PTHR46417:SF1">
    <property type="entry name" value="TRNA (GUANINE-N(1)-)-METHYLTRANSFERASE"/>
    <property type="match status" value="1"/>
</dbReference>
<dbReference type="Pfam" id="PF01746">
    <property type="entry name" value="tRNA_m1G_MT"/>
    <property type="match status" value="1"/>
</dbReference>
<dbReference type="PIRSF" id="PIRSF000386">
    <property type="entry name" value="tRNA_mtase"/>
    <property type="match status" value="1"/>
</dbReference>
<dbReference type="SUPFAM" id="SSF75217">
    <property type="entry name" value="alpha/beta knot"/>
    <property type="match status" value="1"/>
</dbReference>
<feature type="chain" id="PRO_1000130170" description="tRNA (guanine-N(1)-)-methyltransferase">
    <location>
        <begin position="1"/>
        <end position="255"/>
    </location>
</feature>
<feature type="binding site" evidence="1">
    <location>
        <position position="113"/>
    </location>
    <ligand>
        <name>S-adenosyl-L-methionine</name>
        <dbReference type="ChEBI" id="CHEBI:59789"/>
    </ligand>
</feature>
<feature type="binding site" evidence="1">
    <location>
        <begin position="133"/>
        <end position="138"/>
    </location>
    <ligand>
        <name>S-adenosyl-L-methionine</name>
        <dbReference type="ChEBI" id="CHEBI:59789"/>
    </ligand>
</feature>